<protein>
    <recommendedName>
        <fullName>Autophagy-related protein 18</fullName>
    </recommendedName>
</protein>
<proteinExistence type="inferred from homology"/>
<accession>A1CBB8</accession>
<feature type="chain" id="PRO_0000317995" description="Autophagy-related protein 18">
    <location>
        <begin position="1"/>
        <end position="417"/>
    </location>
</feature>
<feature type="repeat" description="WD 1">
    <location>
        <begin position="1"/>
        <end position="36"/>
    </location>
</feature>
<feature type="repeat" description="WD 2">
    <location>
        <begin position="69"/>
        <end position="114"/>
    </location>
</feature>
<feature type="repeat" description="WD 3">
    <location>
        <begin position="139"/>
        <end position="182"/>
    </location>
</feature>
<feature type="repeat" description="WD 4">
    <location>
        <begin position="185"/>
        <end position="225"/>
    </location>
</feature>
<feature type="repeat" description="WD 5">
    <location>
        <begin position="230"/>
        <end position="269"/>
    </location>
</feature>
<feature type="repeat" description="WD 6">
    <location>
        <begin position="312"/>
        <end position="358"/>
    </location>
</feature>
<feature type="repeat" description="WD 7">
    <location>
        <begin position="370"/>
        <end position="410"/>
    </location>
</feature>
<feature type="region of interest" description="Disordered" evidence="3">
    <location>
        <begin position="261"/>
        <end position="314"/>
    </location>
</feature>
<feature type="short sequence motif" description="L/FRRG motif" evidence="2">
    <location>
        <begin position="226"/>
        <end position="230"/>
    </location>
</feature>
<feature type="compositionally biased region" description="Low complexity" evidence="3">
    <location>
        <begin position="262"/>
        <end position="278"/>
    </location>
</feature>
<comment type="function">
    <text evidence="1">The PI(3,5)P2 regulatory complex regulates both the synthesis and turnover of phosphatidylinositol 3,5-bisphosphate (PtdIns(3,5)P2). Necessary for proper vacuole morphology. Plays an important role in osmotically-induced vacuole fragmentation. Required for cytoplasm to vacuole transport (Cvt) vesicle formation, pexophagy and starvation-induced autophagy. Involved in correct atg9 trafficking to the pre-autophagosomal structure. Might also be involved in premeiotic DNA replication (By similarity).</text>
</comment>
<comment type="subunit">
    <text evidence="1">Component of the PI(3,5)P2 regulatory complex.</text>
</comment>
<comment type="subcellular location">
    <subcellularLocation>
        <location evidence="1">Preautophagosomal structure membrane</location>
        <topology evidence="1">Peripheral membrane protein</topology>
    </subcellularLocation>
    <subcellularLocation>
        <location evidence="1">Vacuole membrane</location>
        <topology evidence="1">Peripheral membrane protein</topology>
    </subcellularLocation>
    <subcellularLocation>
        <location evidence="1">Endosome membrane</location>
        <topology evidence="1">Peripheral membrane protein</topology>
    </subcellularLocation>
</comment>
<comment type="domain">
    <text evidence="1">The N-terminus might form a beta-propeller domain involved in specific binding to phosphatidylinositol 3,5-bisphosphate (PIP2), leading to the association of the protein to the membrane.</text>
</comment>
<comment type="domain">
    <text evidence="2">The L/FRRG motif is essential for the cytoplasm to vacuole transport (Cvt) pathway, for the recruitment of atg8 and atg16 to the PAS in nutrient-rich medium, and for its recruitment to and dissociation from the PAS under starvation conditions.</text>
</comment>
<comment type="similarity">
    <text evidence="4">Belongs to the WD repeat PROPPIN family.</text>
</comment>
<organism>
    <name type="scientific">Aspergillus clavatus (strain ATCC 1007 / CBS 513.65 / DSM 816 / NCTC 3887 / NRRL 1 / QM 1276 / 107)</name>
    <dbReference type="NCBI Taxonomy" id="344612"/>
    <lineage>
        <taxon>Eukaryota</taxon>
        <taxon>Fungi</taxon>
        <taxon>Dikarya</taxon>
        <taxon>Ascomycota</taxon>
        <taxon>Pezizomycotina</taxon>
        <taxon>Eurotiomycetes</taxon>
        <taxon>Eurotiomycetidae</taxon>
        <taxon>Eurotiales</taxon>
        <taxon>Aspergillaceae</taxon>
        <taxon>Aspergillus</taxon>
        <taxon>Aspergillus subgen. Fumigati</taxon>
    </lineage>
</organism>
<sequence>MAMNFVTFNQDYSYLAVATSKGFRIFTTDPFAKSYETKEGHIAIIEMLFSTSLVALILSPRRLQITNTKRQSTICELTFPTTVLAVKLNRKRLVIVLEDQIYLYDIQTMKLLYTIQTSPNPNAICALSPSSDNCYLAYPLPQKAPPSSFTPPSHAPPGNTHVSPTSGEVLIFDSLKLEAINVIEAHRSPLACITLNSDGTLLATASDKGTIIRVFSVPDGHKLYQFRRGSMPSRIFSMSFNTTSTLLCVSSSTETIHLFKLSQQTSSSRDTSPSSSTPAGRDRAFSQSSLGHSPDRSDVSGEPDSSEFPARKHNGTLMGIIRRTSQNVGSTVAAKVGGYLPKGVSEMWEPARDFAWIKLPKPSQNAGGSGNNGPLRSVVAMSNNTPQVMVITSDGNFYVFSIDLSKGGEGTLTKQYS</sequence>
<dbReference type="EMBL" id="DS027049">
    <property type="protein sequence ID" value="EAW13036.1"/>
    <property type="molecule type" value="Genomic_DNA"/>
</dbReference>
<dbReference type="RefSeq" id="XP_001274462.1">
    <property type="nucleotide sequence ID" value="XM_001274461.1"/>
</dbReference>
<dbReference type="SMR" id="A1CBB8"/>
<dbReference type="STRING" id="344612.A1CBB8"/>
<dbReference type="EnsemblFungi" id="EAW13036">
    <property type="protein sequence ID" value="EAW13036"/>
    <property type="gene ID" value="ACLA_014730"/>
</dbReference>
<dbReference type="GeneID" id="4706317"/>
<dbReference type="KEGG" id="act:ACLA_014730"/>
<dbReference type="VEuPathDB" id="FungiDB:ACLA_014730"/>
<dbReference type="eggNOG" id="KOG2110">
    <property type="taxonomic scope" value="Eukaryota"/>
</dbReference>
<dbReference type="HOGENOM" id="CLU_025895_5_2_1"/>
<dbReference type="OMA" id="NIAILEM"/>
<dbReference type="OrthoDB" id="1667587at2759"/>
<dbReference type="Proteomes" id="UP000006701">
    <property type="component" value="Unassembled WGS sequence"/>
</dbReference>
<dbReference type="GO" id="GO:0010008">
    <property type="term" value="C:endosome membrane"/>
    <property type="evidence" value="ECO:0007669"/>
    <property type="project" value="UniProtKB-SubCell"/>
</dbReference>
<dbReference type="GO" id="GO:0034045">
    <property type="term" value="C:phagophore assembly site membrane"/>
    <property type="evidence" value="ECO:0007669"/>
    <property type="project" value="UniProtKB-SubCell"/>
</dbReference>
<dbReference type="GO" id="GO:0005774">
    <property type="term" value="C:vacuolar membrane"/>
    <property type="evidence" value="ECO:0007669"/>
    <property type="project" value="UniProtKB-SubCell"/>
</dbReference>
<dbReference type="GO" id="GO:0006914">
    <property type="term" value="P:autophagy"/>
    <property type="evidence" value="ECO:0007669"/>
    <property type="project" value="UniProtKB-KW"/>
</dbReference>
<dbReference type="GO" id="GO:0015031">
    <property type="term" value="P:protein transport"/>
    <property type="evidence" value="ECO:0007669"/>
    <property type="project" value="UniProtKB-KW"/>
</dbReference>
<dbReference type="FunFam" id="2.130.10.10:FF:000965">
    <property type="entry name" value="Autophagy-like protein 18 Atg18"/>
    <property type="match status" value="1"/>
</dbReference>
<dbReference type="Gene3D" id="2.130.10.10">
    <property type="entry name" value="YVTN repeat-like/Quinoprotein amine dehydrogenase"/>
    <property type="match status" value="2"/>
</dbReference>
<dbReference type="InterPro" id="IPR048720">
    <property type="entry name" value="PROPPIN"/>
</dbReference>
<dbReference type="InterPro" id="IPR015943">
    <property type="entry name" value="WD40/YVTN_repeat-like_dom_sf"/>
</dbReference>
<dbReference type="InterPro" id="IPR036322">
    <property type="entry name" value="WD40_repeat_dom_sf"/>
</dbReference>
<dbReference type="InterPro" id="IPR001680">
    <property type="entry name" value="WD40_rpt"/>
</dbReference>
<dbReference type="PANTHER" id="PTHR11227">
    <property type="entry name" value="WD-REPEAT PROTEIN INTERACTING WITH PHOSPHOINOSIDES WIPI -RELATED"/>
    <property type="match status" value="1"/>
</dbReference>
<dbReference type="Pfam" id="PF21032">
    <property type="entry name" value="PROPPIN"/>
    <property type="match status" value="2"/>
</dbReference>
<dbReference type="SMART" id="SM00320">
    <property type="entry name" value="WD40"/>
    <property type="match status" value="2"/>
</dbReference>
<dbReference type="SUPFAM" id="SSF50978">
    <property type="entry name" value="WD40 repeat-like"/>
    <property type="match status" value="1"/>
</dbReference>
<evidence type="ECO:0000250" key="1"/>
<evidence type="ECO:0000250" key="2">
    <source>
        <dbReference type="UniProtKB" id="P43601"/>
    </source>
</evidence>
<evidence type="ECO:0000256" key="3">
    <source>
        <dbReference type="SAM" id="MobiDB-lite"/>
    </source>
</evidence>
<evidence type="ECO:0000305" key="4"/>
<name>ATG18_ASPCL</name>
<gene>
    <name type="primary">atg18</name>
    <name type="ORF">ACLA_014730</name>
</gene>
<keyword id="KW-0072">Autophagy</keyword>
<keyword id="KW-0967">Endosome</keyword>
<keyword id="KW-0472">Membrane</keyword>
<keyword id="KW-0653">Protein transport</keyword>
<keyword id="KW-1185">Reference proteome</keyword>
<keyword id="KW-0677">Repeat</keyword>
<keyword id="KW-0813">Transport</keyword>
<keyword id="KW-0926">Vacuole</keyword>
<keyword id="KW-0853">WD repeat</keyword>
<reference key="1">
    <citation type="journal article" date="2008" name="PLoS Genet.">
        <title>Genomic islands in the pathogenic filamentous fungus Aspergillus fumigatus.</title>
        <authorList>
            <person name="Fedorova N.D."/>
            <person name="Khaldi N."/>
            <person name="Joardar V.S."/>
            <person name="Maiti R."/>
            <person name="Amedeo P."/>
            <person name="Anderson M.J."/>
            <person name="Crabtree J."/>
            <person name="Silva J.C."/>
            <person name="Badger J.H."/>
            <person name="Albarraq A."/>
            <person name="Angiuoli S."/>
            <person name="Bussey H."/>
            <person name="Bowyer P."/>
            <person name="Cotty P.J."/>
            <person name="Dyer P.S."/>
            <person name="Egan A."/>
            <person name="Galens K."/>
            <person name="Fraser-Liggett C.M."/>
            <person name="Haas B.J."/>
            <person name="Inman J.M."/>
            <person name="Kent R."/>
            <person name="Lemieux S."/>
            <person name="Malavazi I."/>
            <person name="Orvis J."/>
            <person name="Roemer T."/>
            <person name="Ronning C.M."/>
            <person name="Sundaram J.P."/>
            <person name="Sutton G."/>
            <person name="Turner G."/>
            <person name="Venter J.C."/>
            <person name="White O.R."/>
            <person name="Whitty B.R."/>
            <person name="Youngman P."/>
            <person name="Wolfe K.H."/>
            <person name="Goldman G.H."/>
            <person name="Wortman J.R."/>
            <person name="Jiang B."/>
            <person name="Denning D.W."/>
            <person name="Nierman W.C."/>
        </authorList>
    </citation>
    <scope>NUCLEOTIDE SEQUENCE [LARGE SCALE GENOMIC DNA]</scope>
    <source>
        <strain>ATCC 1007 / CBS 513.65 / DSM 816 / NCTC 3887 / NRRL 1 / QM 1276 / 107</strain>
    </source>
</reference>